<feature type="chain" id="PRO_1000166497" description="Small ribosomal subunit protein uS17">
    <location>
        <begin position="1"/>
        <end position="86"/>
    </location>
</feature>
<gene>
    <name evidence="1" type="primary">rpsQ</name>
    <name type="ordered locus">SEQ_0064</name>
</gene>
<accession>C0M919</accession>
<dbReference type="EMBL" id="FM204883">
    <property type="protein sequence ID" value="CAW91984.1"/>
    <property type="molecule type" value="Genomic_DNA"/>
</dbReference>
<dbReference type="SMR" id="C0M919"/>
<dbReference type="KEGG" id="seu:SEQ_0064"/>
<dbReference type="HOGENOM" id="CLU_073626_1_0_9"/>
<dbReference type="OrthoDB" id="9811714at2"/>
<dbReference type="Proteomes" id="UP000001365">
    <property type="component" value="Chromosome"/>
</dbReference>
<dbReference type="GO" id="GO:0022627">
    <property type="term" value="C:cytosolic small ribosomal subunit"/>
    <property type="evidence" value="ECO:0007669"/>
    <property type="project" value="TreeGrafter"/>
</dbReference>
<dbReference type="GO" id="GO:0019843">
    <property type="term" value="F:rRNA binding"/>
    <property type="evidence" value="ECO:0007669"/>
    <property type="project" value="UniProtKB-UniRule"/>
</dbReference>
<dbReference type="GO" id="GO:0003735">
    <property type="term" value="F:structural constituent of ribosome"/>
    <property type="evidence" value="ECO:0007669"/>
    <property type="project" value="InterPro"/>
</dbReference>
<dbReference type="GO" id="GO:0006412">
    <property type="term" value="P:translation"/>
    <property type="evidence" value="ECO:0007669"/>
    <property type="project" value="UniProtKB-UniRule"/>
</dbReference>
<dbReference type="CDD" id="cd00364">
    <property type="entry name" value="Ribosomal_uS17"/>
    <property type="match status" value="1"/>
</dbReference>
<dbReference type="FunFam" id="2.40.50.140:FF:000026">
    <property type="entry name" value="30S ribosomal protein S17"/>
    <property type="match status" value="1"/>
</dbReference>
<dbReference type="Gene3D" id="2.40.50.140">
    <property type="entry name" value="Nucleic acid-binding proteins"/>
    <property type="match status" value="1"/>
</dbReference>
<dbReference type="HAMAP" id="MF_01345_B">
    <property type="entry name" value="Ribosomal_uS17_B"/>
    <property type="match status" value="1"/>
</dbReference>
<dbReference type="InterPro" id="IPR012340">
    <property type="entry name" value="NA-bd_OB-fold"/>
</dbReference>
<dbReference type="InterPro" id="IPR000266">
    <property type="entry name" value="Ribosomal_uS17"/>
</dbReference>
<dbReference type="InterPro" id="IPR019984">
    <property type="entry name" value="Ribosomal_uS17_bact/chlr"/>
</dbReference>
<dbReference type="InterPro" id="IPR019979">
    <property type="entry name" value="Ribosomal_uS17_CS"/>
</dbReference>
<dbReference type="NCBIfam" id="NF004123">
    <property type="entry name" value="PRK05610.1"/>
    <property type="match status" value="1"/>
</dbReference>
<dbReference type="NCBIfam" id="TIGR03635">
    <property type="entry name" value="uS17_bact"/>
    <property type="match status" value="1"/>
</dbReference>
<dbReference type="PANTHER" id="PTHR10744">
    <property type="entry name" value="40S RIBOSOMAL PROTEIN S11 FAMILY MEMBER"/>
    <property type="match status" value="1"/>
</dbReference>
<dbReference type="PANTHER" id="PTHR10744:SF1">
    <property type="entry name" value="SMALL RIBOSOMAL SUBUNIT PROTEIN US17M"/>
    <property type="match status" value="1"/>
</dbReference>
<dbReference type="Pfam" id="PF00366">
    <property type="entry name" value="Ribosomal_S17"/>
    <property type="match status" value="1"/>
</dbReference>
<dbReference type="PRINTS" id="PR00973">
    <property type="entry name" value="RIBOSOMALS17"/>
</dbReference>
<dbReference type="SUPFAM" id="SSF50249">
    <property type="entry name" value="Nucleic acid-binding proteins"/>
    <property type="match status" value="1"/>
</dbReference>
<dbReference type="PROSITE" id="PS00056">
    <property type="entry name" value="RIBOSOMAL_S17"/>
    <property type="match status" value="1"/>
</dbReference>
<comment type="function">
    <text evidence="1">One of the primary rRNA binding proteins, it binds specifically to the 5'-end of 16S ribosomal RNA.</text>
</comment>
<comment type="subunit">
    <text evidence="1">Part of the 30S ribosomal subunit.</text>
</comment>
<comment type="similarity">
    <text evidence="1">Belongs to the universal ribosomal protein uS17 family.</text>
</comment>
<keyword id="KW-0687">Ribonucleoprotein</keyword>
<keyword id="KW-0689">Ribosomal protein</keyword>
<keyword id="KW-0694">RNA-binding</keyword>
<keyword id="KW-0699">rRNA-binding</keyword>
<evidence type="ECO:0000255" key="1">
    <source>
        <dbReference type="HAMAP-Rule" id="MF_01345"/>
    </source>
</evidence>
<evidence type="ECO:0000305" key="2"/>
<name>RS17_STRE4</name>
<protein>
    <recommendedName>
        <fullName evidence="1">Small ribosomal subunit protein uS17</fullName>
    </recommendedName>
    <alternativeName>
        <fullName evidence="2">30S ribosomal protein S17</fullName>
    </alternativeName>
</protein>
<organism>
    <name type="scientific">Streptococcus equi subsp. equi (strain 4047)</name>
    <dbReference type="NCBI Taxonomy" id="553482"/>
    <lineage>
        <taxon>Bacteria</taxon>
        <taxon>Bacillati</taxon>
        <taxon>Bacillota</taxon>
        <taxon>Bacilli</taxon>
        <taxon>Lactobacillales</taxon>
        <taxon>Streptococcaceae</taxon>
        <taxon>Streptococcus</taxon>
    </lineage>
</organism>
<reference key="1">
    <citation type="journal article" date="2009" name="PLoS Pathog.">
        <title>Genomic evidence for the evolution of Streptococcus equi: host restriction, increased virulence, and genetic exchange with human pathogens.</title>
        <authorList>
            <person name="Holden M.T.G."/>
            <person name="Heather Z."/>
            <person name="Paillot R."/>
            <person name="Steward K.F."/>
            <person name="Webb K."/>
            <person name="Ainslie F."/>
            <person name="Jourdan T."/>
            <person name="Bason N.C."/>
            <person name="Holroyd N.E."/>
            <person name="Mungall K."/>
            <person name="Quail M.A."/>
            <person name="Sanders M."/>
            <person name="Simmonds M."/>
            <person name="Willey D."/>
            <person name="Brooks K."/>
            <person name="Aanensen D.M."/>
            <person name="Spratt B.G."/>
            <person name="Jolley K.A."/>
            <person name="Maiden M.C.J."/>
            <person name="Kehoe M."/>
            <person name="Chanter N."/>
            <person name="Bentley S.D."/>
            <person name="Robinson C."/>
            <person name="Maskell D.J."/>
            <person name="Parkhill J."/>
            <person name="Waller A.S."/>
        </authorList>
    </citation>
    <scope>NUCLEOTIDE SEQUENCE [LARGE SCALE GENOMIC DNA]</scope>
    <source>
        <strain>4047</strain>
    </source>
</reference>
<proteinExistence type="inferred from homology"/>
<sequence length="86" mass="10083">MERNQRKTLVGRVVSDKMDKTITVIVETKRNHPVYGKRINYSKKYKAHDEKNLAKEGDIVRIMETRPLSATKRFRLVEIVEEAVII</sequence>